<dbReference type="EC" id="3.1.26.11" evidence="2"/>
<dbReference type="EMBL" id="BC113356">
    <property type="protein sequence ID" value="AAI13357.1"/>
    <property type="molecule type" value="mRNA"/>
</dbReference>
<dbReference type="RefSeq" id="NP_001039792.1">
    <property type="nucleotide sequence ID" value="NM_001046327.1"/>
</dbReference>
<dbReference type="RefSeq" id="XP_005224260.1">
    <property type="nucleotide sequence ID" value="XM_005224203.5"/>
</dbReference>
<dbReference type="RefSeq" id="XP_005224261.1">
    <property type="nucleotide sequence ID" value="XM_005224204.5"/>
</dbReference>
<dbReference type="SMR" id="Q29RY4"/>
<dbReference type="FunCoup" id="Q29RY4">
    <property type="interactions" value="1210"/>
</dbReference>
<dbReference type="STRING" id="9913.ENSBTAP00000007468"/>
<dbReference type="PaxDb" id="9913-ENSBTAP00000007468"/>
<dbReference type="GeneID" id="532568"/>
<dbReference type="KEGG" id="bta:532568"/>
<dbReference type="CTD" id="55520"/>
<dbReference type="VEuPathDB" id="HostDB:ENSBTAG00000005683"/>
<dbReference type="eggNOG" id="KOG2121">
    <property type="taxonomic scope" value="Eukaryota"/>
</dbReference>
<dbReference type="HOGENOM" id="CLU_031317_2_2_1"/>
<dbReference type="InParanoid" id="Q29RY4"/>
<dbReference type="OMA" id="GTQRQMM"/>
<dbReference type="OrthoDB" id="527344at2759"/>
<dbReference type="TreeFam" id="TF324462"/>
<dbReference type="Proteomes" id="UP000009136">
    <property type="component" value="Chromosome 24"/>
</dbReference>
<dbReference type="Bgee" id="ENSBTAG00000005683">
    <property type="expression patterns" value="Expressed in anterior segment of eyeball and 106 other cell types or tissues"/>
</dbReference>
<dbReference type="GO" id="GO:0005829">
    <property type="term" value="C:cytosol"/>
    <property type="evidence" value="ECO:0000250"/>
    <property type="project" value="UniProtKB"/>
</dbReference>
<dbReference type="GO" id="GO:0005654">
    <property type="term" value="C:nucleoplasm"/>
    <property type="evidence" value="ECO:0007669"/>
    <property type="project" value="Ensembl"/>
</dbReference>
<dbReference type="GO" id="GO:0005634">
    <property type="term" value="C:nucleus"/>
    <property type="evidence" value="ECO:0000250"/>
    <property type="project" value="UniProtKB"/>
</dbReference>
<dbReference type="GO" id="GO:0042781">
    <property type="term" value="F:3'-tRNA processing endoribonuclease activity"/>
    <property type="evidence" value="ECO:0000318"/>
    <property type="project" value="GO_Central"/>
</dbReference>
<dbReference type="GO" id="GO:0046872">
    <property type="term" value="F:metal ion binding"/>
    <property type="evidence" value="ECO:0007669"/>
    <property type="project" value="UniProtKB-KW"/>
</dbReference>
<dbReference type="GO" id="GO:0004549">
    <property type="term" value="F:tRNA-specific ribonuclease activity"/>
    <property type="evidence" value="ECO:0000250"/>
    <property type="project" value="UniProtKB"/>
</dbReference>
<dbReference type="GO" id="GO:0072344">
    <property type="term" value="P:rescue of stalled ribosome"/>
    <property type="evidence" value="ECO:0007669"/>
    <property type="project" value="Ensembl"/>
</dbReference>
<dbReference type="GO" id="GO:0042780">
    <property type="term" value="P:tRNA 3'-end processing"/>
    <property type="evidence" value="ECO:0000250"/>
    <property type="project" value="UniProtKB"/>
</dbReference>
<dbReference type="CDD" id="cd07717">
    <property type="entry name" value="RNaseZ_ZiPD-like_MBL-fold"/>
    <property type="match status" value="1"/>
</dbReference>
<dbReference type="FunFam" id="3.60.15.10:FF:000069">
    <property type="entry name" value="ElaC ribonuclease Z 1"/>
    <property type="match status" value="1"/>
</dbReference>
<dbReference type="Gene3D" id="3.60.15.10">
    <property type="entry name" value="Ribonuclease Z/Hydroxyacylglutathione hydrolase-like"/>
    <property type="match status" value="1"/>
</dbReference>
<dbReference type="HAMAP" id="MF_01818">
    <property type="entry name" value="RNase_Z_BN"/>
    <property type="match status" value="1"/>
</dbReference>
<dbReference type="InterPro" id="IPR001279">
    <property type="entry name" value="Metallo-B-lactamas"/>
</dbReference>
<dbReference type="InterPro" id="IPR036866">
    <property type="entry name" value="RibonucZ/Hydroxyglut_hydro"/>
</dbReference>
<dbReference type="InterPro" id="IPR013471">
    <property type="entry name" value="RNase_Z/BN"/>
</dbReference>
<dbReference type="NCBIfam" id="NF000801">
    <property type="entry name" value="PRK00055.1-3"/>
    <property type="match status" value="1"/>
</dbReference>
<dbReference type="NCBIfam" id="TIGR02651">
    <property type="entry name" value="RNase_Z"/>
    <property type="match status" value="1"/>
</dbReference>
<dbReference type="PANTHER" id="PTHR46018">
    <property type="entry name" value="ZINC PHOSPHODIESTERASE ELAC PROTEIN 1"/>
    <property type="match status" value="1"/>
</dbReference>
<dbReference type="PANTHER" id="PTHR46018:SF2">
    <property type="entry name" value="ZINC PHOSPHODIESTERASE ELAC PROTEIN 1"/>
    <property type="match status" value="1"/>
</dbReference>
<dbReference type="Pfam" id="PF00753">
    <property type="entry name" value="Lactamase_B"/>
    <property type="match status" value="1"/>
</dbReference>
<dbReference type="Pfam" id="PF12706">
    <property type="entry name" value="Lactamase_B_2"/>
    <property type="match status" value="1"/>
</dbReference>
<dbReference type="SUPFAM" id="SSF56281">
    <property type="entry name" value="Metallo-hydrolase/oxidoreductase"/>
    <property type="match status" value="1"/>
</dbReference>
<feature type="chain" id="PRO_0000240601" description="Zinc phosphodiesterase ELAC protein 1">
    <location>
        <begin position="1"/>
        <end position="363"/>
    </location>
</feature>
<feature type="active site" description="Proton acceptor" evidence="1">
    <location>
        <position position="66"/>
    </location>
</feature>
<feature type="binding site" evidence="2">
    <location>
        <position position="62"/>
    </location>
    <ligand>
        <name>Zn(2+)</name>
        <dbReference type="ChEBI" id="CHEBI:29105"/>
        <label>1</label>
        <note>catalytic</note>
    </ligand>
</feature>
<feature type="binding site" evidence="2">
    <location>
        <position position="64"/>
    </location>
    <ligand>
        <name>Zn(2+)</name>
        <dbReference type="ChEBI" id="CHEBI:29105"/>
        <label>1</label>
        <note>catalytic</note>
    </ligand>
</feature>
<feature type="binding site" evidence="2">
    <location>
        <position position="66"/>
    </location>
    <ligand>
        <name>Zn(2+)</name>
        <dbReference type="ChEBI" id="CHEBI:29105"/>
        <label>2</label>
        <note>catalytic</note>
    </ligand>
</feature>
<feature type="binding site" evidence="2">
    <location>
        <position position="67"/>
    </location>
    <ligand>
        <name>Zn(2+)</name>
        <dbReference type="ChEBI" id="CHEBI:29105"/>
        <label>2</label>
        <note>catalytic</note>
    </ligand>
</feature>
<feature type="binding site" evidence="2">
    <location>
        <position position="182"/>
    </location>
    <ligand>
        <name>Zn(2+)</name>
        <dbReference type="ChEBI" id="CHEBI:29105"/>
        <label>1</label>
        <note>catalytic</note>
    </ligand>
</feature>
<feature type="binding site" evidence="2">
    <location>
        <position position="253"/>
    </location>
    <ligand>
        <name>Zn(2+)</name>
        <dbReference type="ChEBI" id="CHEBI:29105"/>
        <label>1</label>
        <note>catalytic</note>
    </ligand>
</feature>
<feature type="binding site" evidence="2">
    <location>
        <position position="253"/>
    </location>
    <ligand>
        <name>Zn(2+)</name>
        <dbReference type="ChEBI" id="CHEBI:29105"/>
        <label>2</label>
        <note>catalytic</note>
    </ligand>
</feature>
<feature type="binding site" evidence="2">
    <location>
        <position position="313"/>
    </location>
    <ligand>
        <name>Zn(2+)</name>
        <dbReference type="ChEBI" id="CHEBI:29105"/>
        <label>2</label>
        <note>catalytic</note>
    </ligand>
</feature>
<reference key="1">
    <citation type="submission" date="2006-02" db="EMBL/GenBank/DDBJ databases">
        <authorList>
            <consortium name="NIH - Mammalian Gene Collection (MGC) project"/>
        </authorList>
    </citation>
    <scope>NUCLEOTIDE SEQUENCE [LARGE SCALE MRNA]</scope>
    <source>
        <strain>Hereford</strain>
        <tissue>Uterus</tissue>
    </source>
</reference>
<comment type="function">
    <text evidence="2">Zinc phosphodiesterase, which displays some tRNA 3'-processing endonuclease activity. Specifically involved in tRNA repair: acts downstream of the ribosome-associated quality control (RQC) pathway by removing a 2',3'-cyclic phosphate from tRNAs following cleavage by ANKZF1. tRNAs are then processed by TRNT1.</text>
</comment>
<comment type="catalytic activity">
    <reaction evidence="2">
        <text>Endonucleolytic cleavage of RNA, removing extra 3' nucleotides from tRNA precursor, generating 3' termini of tRNAs. A 3'-hydroxy group is left at the tRNA terminus and a 5'-phosphoryl group is left at the trailer molecule.</text>
        <dbReference type="EC" id="3.1.26.11"/>
    </reaction>
</comment>
<comment type="cofactor">
    <cofactor evidence="2">
        <name>Zn(2+)</name>
        <dbReference type="ChEBI" id="CHEBI:29105"/>
    </cofactor>
    <text evidence="2">Binds 2 Zn(2+) ions.</text>
</comment>
<comment type="subunit">
    <text evidence="2">Homodimer.</text>
</comment>
<comment type="subcellular location">
    <subcellularLocation>
        <location evidence="2">Cytoplasm</location>
        <location evidence="2">Cytosol</location>
    </subcellularLocation>
    <subcellularLocation>
        <location evidence="2">Nucleus</location>
    </subcellularLocation>
    <text evidence="2">Mainly cytosolic.</text>
</comment>
<comment type="similarity">
    <text evidence="3">Belongs to the RNase Z family.</text>
</comment>
<organism>
    <name type="scientific">Bos taurus</name>
    <name type="common">Bovine</name>
    <dbReference type="NCBI Taxonomy" id="9913"/>
    <lineage>
        <taxon>Eukaryota</taxon>
        <taxon>Metazoa</taxon>
        <taxon>Chordata</taxon>
        <taxon>Craniata</taxon>
        <taxon>Vertebrata</taxon>
        <taxon>Euteleostomi</taxon>
        <taxon>Mammalia</taxon>
        <taxon>Eutheria</taxon>
        <taxon>Laurasiatheria</taxon>
        <taxon>Artiodactyla</taxon>
        <taxon>Ruminantia</taxon>
        <taxon>Pecora</taxon>
        <taxon>Bovidae</taxon>
        <taxon>Bovinae</taxon>
        <taxon>Bos</taxon>
    </lineage>
</organism>
<keyword id="KW-0963">Cytoplasm</keyword>
<keyword id="KW-0255">Endonuclease</keyword>
<keyword id="KW-0378">Hydrolase</keyword>
<keyword id="KW-0479">Metal-binding</keyword>
<keyword id="KW-0540">Nuclease</keyword>
<keyword id="KW-0539">Nucleus</keyword>
<keyword id="KW-1185">Reference proteome</keyword>
<keyword id="KW-0819">tRNA processing</keyword>
<keyword id="KW-0862">Zinc</keyword>
<name>RNZ1_BOVIN</name>
<protein>
    <recommendedName>
        <fullName>Zinc phosphodiesterase ELAC protein 1</fullName>
        <ecNumber evidence="2">3.1.26.11</ecNumber>
    </recommendedName>
    <alternativeName>
        <fullName>ElaC homolog protein 1</fullName>
    </alternativeName>
    <alternativeName>
        <fullName>Ribonuclease Z 1</fullName>
        <shortName>RNase Z 1</shortName>
    </alternativeName>
    <alternativeName>
        <fullName>tRNA 3 endonuclease 1</fullName>
    </alternativeName>
    <alternativeName>
        <fullName>tRNase Z 1</fullName>
    </alternativeName>
</protein>
<sequence length="363" mass="39979">MSMDVTFLGTGAAYPSPTRGASALVLRCEGECWLFDCGEGTQTQLMKSQLKAGRITKIFITHLHGDHFFGLPGLLCTISLQSGSMVTKQPIEIYGPVGLRDFIWRTMELSHTELVFPYVVHELVPTADQCPTEELQESVQVDKTDNPPKEGEGRTILLDSEENSYLLVDDEQFVVKAFRLFHRIPSFGFSVVEKKRPGKLNAQKLKDLGVPPGPAYGKLKNGISVVLENGVTISPQDVLKKPIVGRKICILGDCSGVVDDAGVKLCFEADLLIHEATLDDTQMDKAKEHGHSTPQMAATFAKLCQAKRLVLTHFSQRYKPVALAREGEADGIVELKKQAESVLDLQEVTLAEDFMVISIPIKK</sequence>
<gene>
    <name type="primary">ELAC1</name>
</gene>
<evidence type="ECO:0000250" key="1">
    <source>
        <dbReference type="UniProtKB" id="P54548"/>
    </source>
</evidence>
<evidence type="ECO:0000250" key="2">
    <source>
        <dbReference type="UniProtKB" id="Q9H777"/>
    </source>
</evidence>
<evidence type="ECO:0000305" key="3"/>
<accession>Q29RY4</accession>
<proteinExistence type="evidence at transcript level"/>